<dbReference type="EMBL" id="CP001097">
    <property type="protein sequence ID" value="ACD91242.1"/>
    <property type="molecule type" value="Genomic_DNA"/>
</dbReference>
<dbReference type="RefSeq" id="WP_012467109.1">
    <property type="nucleotide sequence ID" value="NC_010803.1"/>
</dbReference>
<dbReference type="SMR" id="B3EGX9"/>
<dbReference type="STRING" id="290315.Clim_2218"/>
<dbReference type="KEGG" id="cli:Clim_2218"/>
<dbReference type="eggNOG" id="COG0198">
    <property type="taxonomic scope" value="Bacteria"/>
</dbReference>
<dbReference type="HOGENOM" id="CLU_093315_3_0_10"/>
<dbReference type="Proteomes" id="UP000008841">
    <property type="component" value="Chromosome"/>
</dbReference>
<dbReference type="GO" id="GO:1990904">
    <property type="term" value="C:ribonucleoprotein complex"/>
    <property type="evidence" value="ECO:0007669"/>
    <property type="project" value="UniProtKB-KW"/>
</dbReference>
<dbReference type="GO" id="GO:0005840">
    <property type="term" value="C:ribosome"/>
    <property type="evidence" value="ECO:0007669"/>
    <property type="project" value="UniProtKB-KW"/>
</dbReference>
<dbReference type="GO" id="GO:0019843">
    <property type="term" value="F:rRNA binding"/>
    <property type="evidence" value="ECO:0007669"/>
    <property type="project" value="UniProtKB-UniRule"/>
</dbReference>
<dbReference type="GO" id="GO:0003735">
    <property type="term" value="F:structural constituent of ribosome"/>
    <property type="evidence" value="ECO:0007669"/>
    <property type="project" value="InterPro"/>
</dbReference>
<dbReference type="GO" id="GO:0006412">
    <property type="term" value="P:translation"/>
    <property type="evidence" value="ECO:0007669"/>
    <property type="project" value="UniProtKB-UniRule"/>
</dbReference>
<dbReference type="CDD" id="cd06089">
    <property type="entry name" value="KOW_RPL26"/>
    <property type="match status" value="1"/>
</dbReference>
<dbReference type="Gene3D" id="2.30.30.30">
    <property type="match status" value="1"/>
</dbReference>
<dbReference type="HAMAP" id="MF_01326_B">
    <property type="entry name" value="Ribosomal_uL24_B"/>
    <property type="match status" value="1"/>
</dbReference>
<dbReference type="InterPro" id="IPR005824">
    <property type="entry name" value="KOW"/>
</dbReference>
<dbReference type="InterPro" id="IPR014722">
    <property type="entry name" value="Rib_uL2_dom2"/>
</dbReference>
<dbReference type="InterPro" id="IPR003256">
    <property type="entry name" value="Ribosomal_uL24"/>
</dbReference>
<dbReference type="InterPro" id="IPR005825">
    <property type="entry name" value="Ribosomal_uL24_CS"/>
</dbReference>
<dbReference type="InterPro" id="IPR041988">
    <property type="entry name" value="Ribosomal_uL24_KOW"/>
</dbReference>
<dbReference type="InterPro" id="IPR008991">
    <property type="entry name" value="Translation_prot_SH3-like_sf"/>
</dbReference>
<dbReference type="NCBIfam" id="TIGR01079">
    <property type="entry name" value="rplX_bact"/>
    <property type="match status" value="1"/>
</dbReference>
<dbReference type="PANTHER" id="PTHR12903">
    <property type="entry name" value="MITOCHONDRIAL RIBOSOMAL PROTEIN L24"/>
    <property type="match status" value="1"/>
</dbReference>
<dbReference type="Pfam" id="PF00467">
    <property type="entry name" value="KOW"/>
    <property type="match status" value="1"/>
</dbReference>
<dbReference type="Pfam" id="PF17136">
    <property type="entry name" value="ribosomal_L24"/>
    <property type="match status" value="1"/>
</dbReference>
<dbReference type="SMART" id="SM00739">
    <property type="entry name" value="KOW"/>
    <property type="match status" value="1"/>
</dbReference>
<dbReference type="SUPFAM" id="SSF50104">
    <property type="entry name" value="Translation proteins SH3-like domain"/>
    <property type="match status" value="1"/>
</dbReference>
<dbReference type="PROSITE" id="PS01108">
    <property type="entry name" value="RIBOSOMAL_L24"/>
    <property type="match status" value="1"/>
</dbReference>
<sequence>MKTGIKKVKLHVKKNDSVVVISGNDKGKAGKVLRVYPQKGRVIIEGVNIRKRHMKPTQSHPQGSIIEREFPIHASNVKKS</sequence>
<keyword id="KW-0687">Ribonucleoprotein</keyword>
<keyword id="KW-0689">Ribosomal protein</keyword>
<keyword id="KW-0694">RNA-binding</keyword>
<keyword id="KW-0699">rRNA-binding</keyword>
<name>RL24_CHLL2</name>
<reference key="1">
    <citation type="submission" date="2008-05" db="EMBL/GenBank/DDBJ databases">
        <title>Complete sequence of Chlorobium limicola DSM 245.</title>
        <authorList>
            <consortium name="US DOE Joint Genome Institute"/>
            <person name="Lucas S."/>
            <person name="Copeland A."/>
            <person name="Lapidus A."/>
            <person name="Glavina del Rio T."/>
            <person name="Dalin E."/>
            <person name="Tice H."/>
            <person name="Bruce D."/>
            <person name="Goodwin L."/>
            <person name="Pitluck S."/>
            <person name="Schmutz J."/>
            <person name="Larimer F."/>
            <person name="Land M."/>
            <person name="Hauser L."/>
            <person name="Kyrpides N."/>
            <person name="Ovchinnikova G."/>
            <person name="Zhao F."/>
            <person name="Li T."/>
            <person name="Liu Z."/>
            <person name="Overmann J."/>
            <person name="Bryant D.A."/>
            <person name="Richardson P."/>
        </authorList>
    </citation>
    <scope>NUCLEOTIDE SEQUENCE [LARGE SCALE GENOMIC DNA]</scope>
    <source>
        <strain>DSM 245 / NBRC 103803 / 6330</strain>
    </source>
</reference>
<accession>B3EGX9</accession>
<organism>
    <name type="scientific">Chlorobium limicola (strain DSM 245 / NBRC 103803 / 6330)</name>
    <dbReference type="NCBI Taxonomy" id="290315"/>
    <lineage>
        <taxon>Bacteria</taxon>
        <taxon>Pseudomonadati</taxon>
        <taxon>Chlorobiota</taxon>
        <taxon>Chlorobiia</taxon>
        <taxon>Chlorobiales</taxon>
        <taxon>Chlorobiaceae</taxon>
        <taxon>Chlorobium/Pelodictyon group</taxon>
        <taxon>Chlorobium</taxon>
    </lineage>
</organism>
<gene>
    <name evidence="1" type="primary">rplX</name>
    <name type="ordered locus">Clim_2218</name>
</gene>
<evidence type="ECO:0000255" key="1">
    <source>
        <dbReference type="HAMAP-Rule" id="MF_01326"/>
    </source>
</evidence>
<evidence type="ECO:0000256" key="2">
    <source>
        <dbReference type="SAM" id="MobiDB-lite"/>
    </source>
</evidence>
<evidence type="ECO:0000305" key="3"/>
<feature type="chain" id="PRO_0000355652" description="Large ribosomal subunit protein uL24">
    <location>
        <begin position="1"/>
        <end position="80"/>
    </location>
</feature>
<feature type="region of interest" description="Disordered" evidence="2">
    <location>
        <begin position="53"/>
        <end position="80"/>
    </location>
</feature>
<comment type="function">
    <text evidence="1">One of two assembly initiator proteins, it binds directly to the 5'-end of the 23S rRNA, where it nucleates assembly of the 50S subunit.</text>
</comment>
<comment type="function">
    <text evidence="1">One of the proteins that surrounds the polypeptide exit tunnel on the outside of the subunit.</text>
</comment>
<comment type="subunit">
    <text evidence="1">Part of the 50S ribosomal subunit.</text>
</comment>
<comment type="similarity">
    <text evidence="1">Belongs to the universal ribosomal protein uL24 family.</text>
</comment>
<proteinExistence type="inferred from homology"/>
<protein>
    <recommendedName>
        <fullName evidence="1">Large ribosomal subunit protein uL24</fullName>
    </recommendedName>
    <alternativeName>
        <fullName evidence="3">50S ribosomal protein L24</fullName>
    </alternativeName>
</protein>